<gene>
    <name evidence="1" type="primary">rpsD</name>
    <name type="ordered locus">TW392</name>
</gene>
<dbReference type="EMBL" id="BX251411">
    <property type="protein sequence ID" value="CAD67063.1"/>
    <property type="molecule type" value="Genomic_DNA"/>
</dbReference>
<dbReference type="RefSeq" id="WP_011096343.1">
    <property type="nucleotide sequence ID" value="NC_004551.1"/>
</dbReference>
<dbReference type="SMR" id="Q83HV1"/>
<dbReference type="GeneID" id="67388170"/>
<dbReference type="KEGG" id="tws:TW392"/>
<dbReference type="HOGENOM" id="CLU_092403_0_3_11"/>
<dbReference type="GO" id="GO:0015935">
    <property type="term" value="C:small ribosomal subunit"/>
    <property type="evidence" value="ECO:0007669"/>
    <property type="project" value="InterPro"/>
</dbReference>
<dbReference type="GO" id="GO:0019843">
    <property type="term" value="F:rRNA binding"/>
    <property type="evidence" value="ECO:0007669"/>
    <property type="project" value="UniProtKB-UniRule"/>
</dbReference>
<dbReference type="GO" id="GO:0003735">
    <property type="term" value="F:structural constituent of ribosome"/>
    <property type="evidence" value="ECO:0007669"/>
    <property type="project" value="InterPro"/>
</dbReference>
<dbReference type="GO" id="GO:0042274">
    <property type="term" value="P:ribosomal small subunit biogenesis"/>
    <property type="evidence" value="ECO:0007669"/>
    <property type="project" value="TreeGrafter"/>
</dbReference>
<dbReference type="GO" id="GO:0006412">
    <property type="term" value="P:translation"/>
    <property type="evidence" value="ECO:0007669"/>
    <property type="project" value="UniProtKB-UniRule"/>
</dbReference>
<dbReference type="CDD" id="cd00165">
    <property type="entry name" value="S4"/>
    <property type="match status" value="1"/>
</dbReference>
<dbReference type="FunFam" id="3.10.290.10:FF:000001">
    <property type="entry name" value="30S ribosomal protein S4"/>
    <property type="match status" value="1"/>
</dbReference>
<dbReference type="Gene3D" id="1.10.1050.10">
    <property type="entry name" value="Ribosomal Protein S4 Delta 41, Chain A, domain 1"/>
    <property type="match status" value="1"/>
</dbReference>
<dbReference type="Gene3D" id="3.10.290.10">
    <property type="entry name" value="RNA-binding S4 domain"/>
    <property type="match status" value="1"/>
</dbReference>
<dbReference type="HAMAP" id="MF_01306_B">
    <property type="entry name" value="Ribosomal_uS4_B"/>
    <property type="match status" value="1"/>
</dbReference>
<dbReference type="InterPro" id="IPR022801">
    <property type="entry name" value="Ribosomal_uS4"/>
</dbReference>
<dbReference type="InterPro" id="IPR005709">
    <property type="entry name" value="Ribosomal_uS4_bac-type"/>
</dbReference>
<dbReference type="InterPro" id="IPR018079">
    <property type="entry name" value="Ribosomal_uS4_CS"/>
</dbReference>
<dbReference type="InterPro" id="IPR001912">
    <property type="entry name" value="Ribosomal_uS4_N"/>
</dbReference>
<dbReference type="InterPro" id="IPR002942">
    <property type="entry name" value="S4_RNA-bd"/>
</dbReference>
<dbReference type="InterPro" id="IPR036986">
    <property type="entry name" value="S4_RNA-bd_sf"/>
</dbReference>
<dbReference type="NCBIfam" id="NF003717">
    <property type="entry name" value="PRK05327.1"/>
    <property type="match status" value="1"/>
</dbReference>
<dbReference type="NCBIfam" id="TIGR01017">
    <property type="entry name" value="rpsD_bact"/>
    <property type="match status" value="1"/>
</dbReference>
<dbReference type="PANTHER" id="PTHR11831">
    <property type="entry name" value="30S 40S RIBOSOMAL PROTEIN"/>
    <property type="match status" value="1"/>
</dbReference>
<dbReference type="PANTHER" id="PTHR11831:SF4">
    <property type="entry name" value="SMALL RIBOSOMAL SUBUNIT PROTEIN US4M"/>
    <property type="match status" value="1"/>
</dbReference>
<dbReference type="Pfam" id="PF00163">
    <property type="entry name" value="Ribosomal_S4"/>
    <property type="match status" value="1"/>
</dbReference>
<dbReference type="Pfam" id="PF01479">
    <property type="entry name" value="S4"/>
    <property type="match status" value="1"/>
</dbReference>
<dbReference type="SMART" id="SM01390">
    <property type="entry name" value="Ribosomal_S4"/>
    <property type="match status" value="1"/>
</dbReference>
<dbReference type="SMART" id="SM00363">
    <property type="entry name" value="S4"/>
    <property type="match status" value="1"/>
</dbReference>
<dbReference type="SUPFAM" id="SSF55174">
    <property type="entry name" value="Alpha-L RNA-binding motif"/>
    <property type="match status" value="1"/>
</dbReference>
<dbReference type="PROSITE" id="PS00632">
    <property type="entry name" value="RIBOSOMAL_S4"/>
    <property type="match status" value="1"/>
</dbReference>
<dbReference type="PROSITE" id="PS50889">
    <property type="entry name" value="S4"/>
    <property type="match status" value="1"/>
</dbReference>
<evidence type="ECO:0000255" key="1">
    <source>
        <dbReference type="HAMAP-Rule" id="MF_01306"/>
    </source>
</evidence>
<evidence type="ECO:0000305" key="2"/>
<protein>
    <recommendedName>
        <fullName evidence="1">Small ribosomal subunit protein uS4</fullName>
    </recommendedName>
    <alternativeName>
        <fullName evidence="2">30S ribosomal protein S4</fullName>
    </alternativeName>
</protein>
<sequence>MSSCSRTRLSRALGVPLTPKAARLMEVRPYPPGQHGRFRRKGDSDYAVRLREKQRLRGQYGLREKQLASVYHEARRVKGLAGENLVEMLEMRLDALVLRAAFARSISQARQLVVHRHILVDGKLVDRPSYSVSPGQTVKVKPKSVPLDPFQVAASGGHADVLPPIPGYIEADLEGLSFRLVRRPKRSEVPVTCNVQLVVEYYAAR</sequence>
<name>RS4_TROW8</name>
<reference key="1">
    <citation type="journal article" date="2003" name="Lancet">
        <title>Sequencing and analysis of the genome of the Whipple's disease bacterium Tropheryma whipplei.</title>
        <authorList>
            <person name="Bentley S.D."/>
            <person name="Maiwald M."/>
            <person name="Murphy L.D."/>
            <person name="Pallen M.J."/>
            <person name="Yeats C.A."/>
            <person name="Dover L.G."/>
            <person name="Norbertczak H.T."/>
            <person name="Besra G.S."/>
            <person name="Quail M.A."/>
            <person name="Harris D.E."/>
            <person name="von Herbay A."/>
            <person name="Goble A."/>
            <person name="Rutter S."/>
            <person name="Squares R."/>
            <person name="Squares S."/>
            <person name="Barrell B.G."/>
            <person name="Parkhill J."/>
            <person name="Relman D.A."/>
        </authorList>
    </citation>
    <scope>NUCLEOTIDE SEQUENCE [LARGE SCALE GENOMIC DNA]</scope>
    <source>
        <strain>TW08/27</strain>
    </source>
</reference>
<accession>Q83HV1</accession>
<proteinExistence type="inferred from homology"/>
<organism>
    <name type="scientific">Tropheryma whipplei (strain TW08/27)</name>
    <name type="common">Whipple's bacillus</name>
    <dbReference type="NCBI Taxonomy" id="218496"/>
    <lineage>
        <taxon>Bacteria</taxon>
        <taxon>Bacillati</taxon>
        <taxon>Actinomycetota</taxon>
        <taxon>Actinomycetes</taxon>
        <taxon>Micrococcales</taxon>
        <taxon>Tropherymataceae</taxon>
        <taxon>Tropheryma</taxon>
    </lineage>
</organism>
<comment type="function">
    <text evidence="1">One of the primary rRNA binding proteins, it binds directly to 16S rRNA where it nucleates assembly of the body of the 30S subunit.</text>
</comment>
<comment type="function">
    <text evidence="1">With S5 and S12 plays an important role in translational accuracy.</text>
</comment>
<comment type="subunit">
    <text evidence="1">Part of the 30S ribosomal subunit. Contacts protein S5. The interaction surface between S4 and S5 is involved in control of translational fidelity.</text>
</comment>
<comment type="similarity">
    <text evidence="1">Belongs to the universal ribosomal protein uS4 family.</text>
</comment>
<keyword id="KW-0687">Ribonucleoprotein</keyword>
<keyword id="KW-0689">Ribosomal protein</keyword>
<keyword id="KW-0694">RNA-binding</keyword>
<keyword id="KW-0699">rRNA-binding</keyword>
<feature type="chain" id="PRO_0000132487" description="Small ribosomal subunit protein uS4">
    <location>
        <begin position="1"/>
        <end position="205"/>
    </location>
</feature>
<feature type="domain" description="S4 RNA-binding" evidence="1">
    <location>
        <begin position="91"/>
        <end position="149"/>
    </location>
</feature>